<comment type="function">
    <text evidence="1">Catalyzes the synthesis of beta-nicotinate D-ribonucleotide from nicotinate and 5-phospho-D-ribose 1-phosphate at the expense of ATP.</text>
</comment>
<comment type="catalytic activity">
    <reaction evidence="1">
        <text>nicotinate + 5-phospho-alpha-D-ribose 1-diphosphate + ATP + H2O = nicotinate beta-D-ribonucleotide + ADP + phosphate + diphosphate</text>
        <dbReference type="Rhea" id="RHEA:36163"/>
        <dbReference type="ChEBI" id="CHEBI:15377"/>
        <dbReference type="ChEBI" id="CHEBI:30616"/>
        <dbReference type="ChEBI" id="CHEBI:32544"/>
        <dbReference type="ChEBI" id="CHEBI:33019"/>
        <dbReference type="ChEBI" id="CHEBI:43474"/>
        <dbReference type="ChEBI" id="CHEBI:57502"/>
        <dbReference type="ChEBI" id="CHEBI:58017"/>
        <dbReference type="ChEBI" id="CHEBI:456216"/>
        <dbReference type="EC" id="6.3.4.21"/>
    </reaction>
</comment>
<comment type="pathway">
    <text evidence="1">Cofactor biosynthesis; NAD(+) biosynthesis; nicotinate D-ribonucleotide from nicotinate: step 1/1.</text>
</comment>
<comment type="PTM">
    <text evidence="1">Transiently phosphorylated on a His residue during the reaction cycle. Phosphorylation strongly increases the affinity for substrates and increases the rate of nicotinate D-ribonucleotide production. Dephosphorylation regenerates the low-affinity form of the enzyme, leading to product release.</text>
</comment>
<comment type="similarity">
    <text evidence="1">Belongs to the NAPRTase family.</text>
</comment>
<keyword id="KW-0436">Ligase</keyword>
<keyword id="KW-0597">Phosphoprotein</keyword>
<keyword id="KW-0662">Pyridine nucleotide biosynthesis</keyword>
<keyword id="KW-1185">Reference proteome</keyword>
<accession>B2TUE4</accession>
<proteinExistence type="inferred from homology"/>
<evidence type="ECO:0000255" key="1">
    <source>
        <dbReference type="HAMAP-Rule" id="MF_00570"/>
    </source>
</evidence>
<feature type="chain" id="PRO_1000129490" description="Nicotinate phosphoribosyltransferase">
    <location>
        <begin position="1"/>
        <end position="400"/>
    </location>
</feature>
<feature type="modified residue" description="Phosphohistidine; by autocatalysis" evidence="1">
    <location>
        <position position="220"/>
    </location>
</feature>
<dbReference type="EC" id="6.3.4.21" evidence="1"/>
<dbReference type="EMBL" id="CP001063">
    <property type="protein sequence ID" value="ACD09571.1"/>
    <property type="molecule type" value="Genomic_DNA"/>
</dbReference>
<dbReference type="RefSeq" id="WP_001323688.1">
    <property type="nucleotide sequence ID" value="NC_010658.1"/>
</dbReference>
<dbReference type="SMR" id="B2TUE4"/>
<dbReference type="STRING" id="344609.SbBS512_E2387"/>
<dbReference type="KEGG" id="sbc:SbBS512_E2387"/>
<dbReference type="HOGENOM" id="CLU_030991_1_0_6"/>
<dbReference type="UniPathway" id="UPA00253">
    <property type="reaction ID" value="UER00457"/>
</dbReference>
<dbReference type="Proteomes" id="UP000001030">
    <property type="component" value="Chromosome"/>
</dbReference>
<dbReference type="GO" id="GO:0005829">
    <property type="term" value="C:cytosol"/>
    <property type="evidence" value="ECO:0007669"/>
    <property type="project" value="TreeGrafter"/>
</dbReference>
<dbReference type="GO" id="GO:0004516">
    <property type="term" value="F:nicotinate phosphoribosyltransferase activity"/>
    <property type="evidence" value="ECO:0007669"/>
    <property type="project" value="UniProtKB-UniRule"/>
</dbReference>
<dbReference type="GO" id="GO:0034355">
    <property type="term" value="P:NAD biosynthetic process via the salvage pathway"/>
    <property type="evidence" value="ECO:0007669"/>
    <property type="project" value="TreeGrafter"/>
</dbReference>
<dbReference type="CDD" id="cd01401">
    <property type="entry name" value="PncB_like"/>
    <property type="match status" value="1"/>
</dbReference>
<dbReference type="FunFam" id="3.20.140.10:FF:000001">
    <property type="entry name" value="Nicotinate phosphoribosyltransferase"/>
    <property type="match status" value="1"/>
</dbReference>
<dbReference type="Gene3D" id="3.20.140.10">
    <property type="entry name" value="nicotinate phosphoribosyltransferase"/>
    <property type="match status" value="1"/>
</dbReference>
<dbReference type="HAMAP" id="MF_00570">
    <property type="entry name" value="NAPRTase"/>
    <property type="match status" value="1"/>
</dbReference>
<dbReference type="InterPro" id="IPR041525">
    <property type="entry name" value="N/Namide_PRibTrfase"/>
</dbReference>
<dbReference type="InterPro" id="IPR040727">
    <property type="entry name" value="NAPRTase_N"/>
</dbReference>
<dbReference type="InterPro" id="IPR006406">
    <property type="entry name" value="Nic_PRibTrfase"/>
</dbReference>
<dbReference type="InterPro" id="IPR007229">
    <property type="entry name" value="Nic_PRibTrfase-Fam"/>
</dbReference>
<dbReference type="InterPro" id="IPR036068">
    <property type="entry name" value="Nicotinate_pribotase-like_C"/>
</dbReference>
<dbReference type="NCBIfam" id="TIGR01514">
    <property type="entry name" value="NAPRTase"/>
    <property type="match status" value="1"/>
</dbReference>
<dbReference type="NCBIfam" id="NF003704">
    <property type="entry name" value="PRK05321.1"/>
    <property type="match status" value="1"/>
</dbReference>
<dbReference type="PANTHER" id="PTHR11098">
    <property type="entry name" value="NICOTINATE PHOSPHORIBOSYLTRANSFERASE"/>
    <property type="match status" value="1"/>
</dbReference>
<dbReference type="PANTHER" id="PTHR11098:SF1">
    <property type="entry name" value="NICOTINATE PHOSPHORIBOSYLTRANSFERASE"/>
    <property type="match status" value="1"/>
</dbReference>
<dbReference type="Pfam" id="PF04095">
    <property type="entry name" value="NAPRTase"/>
    <property type="match status" value="1"/>
</dbReference>
<dbReference type="Pfam" id="PF17767">
    <property type="entry name" value="NAPRTase_N"/>
    <property type="match status" value="1"/>
</dbReference>
<dbReference type="PIRSF" id="PIRSF000484">
    <property type="entry name" value="NAPRT"/>
    <property type="match status" value="1"/>
</dbReference>
<dbReference type="SUPFAM" id="SSF51690">
    <property type="entry name" value="Nicotinate/Quinolinate PRTase C-terminal domain-like"/>
    <property type="match status" value="1"/>
</dbReference>
<dbReference type="SUPFAM" id="SSF54675">
    <property type="entry name" value="Nicotinate/Quinolinate PRTase N-terminal domain-like"/>
    <property type="match status" value="1"/>
</dbReference>
<name>PNCB_SHIB3</name>
<sequence length="400" mass="45910">MTQFASPVLHSLLDTDAYKLHMQQAVFHHYYDVHVAAEFRCRGDDLLGIYADAIREQIQAMQHLRLQDDEYQWLSALPFFKADYLNWLREFRFNPEQVTVSNDNGKLDIRLSGPWREVILWEVPLLAVISEMVHRYRSPQADVAQALDTLESKLVDFSALTAGLDMSRFHLMDFGTRRRFSREVQETIVKRLQQESWFVGTSNYDLARRLSLTPMGTQAHEWFQAHQQISPDLANSQRAALAAWLEEYPDQLGIALTDCITMDAFLRDFGVEFASRYQGLRHDSGDPVEWGEKAIAHYKKLGIDPQSKTLVFSDNLDLRKAVELYRHFSSRVQLSFGIGTRLTCDIPQVKPLNIVIKLVECNGKPVAKLSDSPGKTICHDKAFVRALRKAFDLPHIKKAS</sequence>
<gene>
    <name evidence="1" type="primary">pncB</name>
    <name type="ordered locus">SbBS512_E2387</name>
</gene>
<reference key="1">
    <citation type="submission" date="2008-05" db="EMBL/GenBank/DDBJ databases">
        <title>Complete sequence of Shigella boydii serotype 18 strain BS512.</title>
        <authorList>
            <person name="Rasko D.A."/>
            <person name="Rosovitz M."/>
            <person name="Maurelli A.T."/>
            <person name="Myers G."/>
            <person name="Seshadri R."/>
            <person name="Cer R."/>
            <person name="Jiang L."/>
            <person name="Ravel J."/>
            <person name="Sebastian Y."/>
        </authorList>
    </citation>
    <scope>NUCLEOTIDE SEQUENCE [LARGE SCALE GENOMIC DNA]</scope>
    <source>
        <strain>CDC 3083-94 / BS512</strain>
    </source>
</reference>
<protein>
    <recommendedName>
        <fullName evidence="1">Nicotinate phosphoribosyltransferase</fullName>
        <shortName evidence="1">NAPRTase</shortName>
        <ecNumber evidence="1">6.3.4.21</ecNumber>
    </recommendedName>
</protein>
<organism>
    <name type="scientific">Shigella boydii serotype 18 (strain CDC 3083-94 / BS512)</name>
    <dbReference type="NCBI Taxonomy" id="344609"/>
    <lineage>
        <taxon>Bacteria</taxon>
        <taxon>Pseudomonadati</taxon>
        <taxon>Pseudomonadota</taxon>
        <taxon>Gammaproteobacteria</taxon>
        <taxon>Enterobacterales</taxon>
        <taxon>Enterobacteriaceae</taxon>
        <taxon>Shigella</taxon>
    </lineage>
</organism>